<dbReference type="EC" id="2.3.2.26"/>
<dbReference type="EMBL" id="GL988043">
    <property type="protein sequence ID" value="EGS20106.1"/>
    <property type="status" value="ALT_SEQ"/>
    <property type="molecule type" value="Genomic_DNA"/>
</dbReference>
<dbReference type="RefSeq" id="XP_006694991.1">
    <property type="nucleotide sequence ID" value="XM_006694928.1"/>
</dbReference>
<dbReference type="SMR" id="G0S9J5"/>
<dbReference type="STRING" id="759272.G0S9J5"/>
<dbReference type="GeneID" id="18258649"/>
<dbReference type="KEGG" id="cthr:CTHT_0046110"/>
<dbReference type="eggNOG" id="KOG0940">
    <property type="taxonomic scope" value="Eukaryota"/>
</dbReference>
<dbReference type="HOGENOM" id="CLU_002173_0_0_1"/>
<dbReference type="OrthoDB" id="8068875at2759"/>
<dbReference type="UniPathway" id="UPA00143"/>
<dbReference type="Proteomes" id="UP000008066">
    <property type="component" value="Unassembled WGS sequence"/>
</dbReference>
<dbReference type="GO" id="GO:0005737">
    <property type="term" value="C:cytoplasm"/>
    <property type="evidence" value="ECO:0007669"/>
    <property type="project" value="UniProtKB-SubCell"/>
</dbReference>
<dbReference type="GO" id="GO:0061630">
    <property type="term" value="F:ubiquitin protein ligase activity"/>
    <property type="evidence" value="ECO:0007669"/>
    <property type="project" value="InterPro"/>
</dbReference>
<dbReference type="GO" id="GO:0046907">
    <property type="term" value="P:intracellular transport"/>
    <property type="evidence" value="ECO:0007669"/>
    <property type="project" value="UniProtKB-ARBA"/>
</dbReference>
<dbReference type="GO" id="GO:0016567">
    <property type="term" value="P:protein ubiquitination"/>
    <property type="evidence" value="ECO:0007669"/>
    <property type="project" value="UniProtKB-UniPathway"/>
</dbReference>
<dbReference type="GO" id="GO:0006511">
    <property type="term" value="P:ubiquitin-dependent protein catabolic process"/>
    <property type="evidence" value="ECO:0007669"/>
    <property type="project" value="InterPro"/>
</dbReference>
<dbReference type="CDD" id="cd08382">
    <property type="entry name" value="C2_Smurf-like"/>
    <property type="match status" value="1"/>
</dbReference>
<dbReference type="CDD" id="cd00078">
    <property type="entry name" value="HECTc"/>
    <property type="match status" value="1"/>
</dbReference>
<dbReference type="CDD" id="cd00201">
    <property type="entry name" value="WW"/>
    <property type="match status" value="3"/>
</dbReference>
<dbReference type="FunFam" id="2.20.70.10:FF:000011">
    <property type="entry name" value="E3 ubiquitin-protein ligase"/>
    <property type="match status" value="1"/>
</dbReference>
<dbReference type="FunFam" id="2.20.70.10:FF:000017">
    <property type="entry name" value="E3 ubiquitin-protein ligase"/>
    <property type="match status" value="1"/>
</dbReference>
<dbReference type="FunFam" id="2.60.40.150:FF:000074">
    <property type="entry name" value="E3 ubiquitin-protein ligase"/>
    <property type="match status" value="1"/>
</dbReference>
<dbReference type="FunFam" id="3.90.1750.10:FF:000005">
    <property type="entry name" value="E3 ubiquitin-protein ligase"/>
    <property type="match status" value="1"/>
</dbReference>
<dbReference type="FunFam" id="3.30.2160.10:FF:000001">
    <property type="entry name" value="E3 ubiquitin-protein ligase NEDD4-like"/>
    <property type="match status" value="1"/>
</dbReference>
<dbReference type="FunFam" id="3.30.2410.10:FF:000001">
    <property type="entry name" value="E3 ubiquitin-protein ligase NEDD4-like"/>
    <property type="match status" value="1"/>
</dbReference>
<dbReference type="Gene3D" id="2.20.70.10">
    <property type="match status" value="2"/>
</dbReference>
<dbReference type="Gene3D" id="2.60.40.150">
    <property type="entry name" value="C2 domain"/>
    <property type="match status" value="1"/>
</dbReference>
<dbReference type="Gene3D" id="3.30.2160.10">
    <property type="entry name" value="Hect, E3 ligase catalytic domain"/>
    <property type="match status" value="1"/>
</dbReference>
<dbReference type="Gene3D" id="3.30.2410.10">
    <property type="entry name" value="Hect, E3 ligase catalytic domain"/>
    <property type="match status" value="1"/>
</dbReference>
<dbReference type="Gene3D" id="3.90.1750.10">
    <property type="entry name" value="Hect, E3 ligase catalytic domains"/>
    <property type="match status" value="1"/>
</dbReference>
<dbReference type="InterPro" id="IPR000008">
    <property type="entry name" value="C2_dom"/>
</dbReference>
<dbReference type="InterPro" id="IPR035892">
    <property type="entry name" value="C2_domain_sf"/>
</dbReference>
<dbReference type="InterPro" id="IPR024928">
    <property type="entry name" value="E3_ub_ligase_SMURF1"/>
</dbReference>
<dbReference type="InterPro" id="IPR050409">
    <property type="entry name" value="E3_ubiq-protein_ligase"/>
</dbReference>
<dbReference type="InterPro" id="IPR000569">
    <property type="entry name" value="HECT_dom"/>
</dbReference>
<dbReference type="InterPro" id="IPR035983">
    <property type="entry name" value="Hect_E3_ubiquitin_ligase"/>
</dbReference>
<dbReference type="InterPro" id="IPR001202">
    <property type="entry name" value="WW_dom"/>
</dbReference>
<dbReference type="InterPro" id="IPR036020">
    <property type="entry name" value="WW_dom_sf"/>
</dbReference>
<dbReference type="PANTHER" id="PTHR11254:SF440">
    <property type="entry name" value="E3 UBIQUITIN-PROTEIN LIGASE NEDD-4"/>
    <property type="match status" value="1"/>
</dbReference>
<dbReference type="PANTHER" id="PTHR11254">
    <property type="entry name" value="HECT DOMAIN UBIQUITIN-PROTEIN LIGASE"/>
    <property type="match status" value="1"/>
</dbReference>
<dbReference type="Pfam" id="PF00168">
    <property type="entry name" value="C2"/>
    <property type="match status" value="1"/>
</dbReference>
<dbReference type="Pfam" id="PF00632">
    <property type="entry name" value="HECT"/>
    <property type="match status" value="1"/>
</dbReference>
<dbReference type="Pfam" id="PF00397">
    <property type="entry name" value="WW"/>
    <property type="match status" value="3"/>
</dbReference>
<dbReference type="PIRSF" id="PIRSF001569">
    <property type="entry name" value="E3_ub_ligase_SMURF1"/>
    <property type="match status" value="1"/>
</dbReference>
<dbReference type="SMART" id="SM00239">
    <property type="entry name" value="C2"/>
    <property type="match status" value="1"/>
</dbReference>
<dbReference type="SMART" id="SM00119">
    <property type="entry name" value="HECTc"/>
    <property type="match status" value="1"/>
</dbReference>
<dbReference type="SMART" id="SM00456">
    <property type="entry name" value="WW"/>
    <property type="match status" value="3"/>
</dbReference>
<dbReference type="SUPFAM" id="SSF49562">
    <property type="entry name" value="C2 domain (Calcium/lipid-binding domain, CaLB)"/>
    <property type="match status" value="1"/>
</dbReference>
<dbReference type="SUPFAM" id="SSF56204">
    <property type="entry name" value="Hect, E3 ligase catalytic domain"/>
    <property type="match status" value="1"/>
</dbReference>
<dbReference type="SUPFAM" id="SSF51045">
    <property type="entry name" value="WW domain"/>
    <property type="match status" value="3"/>
</dbReference>
<dbReference type="PROSITE" id="PS50004">
    <property type="entry name" value="C2"/>
    <property type="match status" value="1"/>
</dbReference>
<dbReference type="PROSITE" id="PS50237">
    <property type="entry name" value="HECT"/>
    <property type="match status" value="1"/>
</dbReference>
<dbReference type="PROSITE" id="PS01159">
    <property type="entry name" value="WW_DOMAIN_1"/>
    <property type="match status" value="3"/>
</dbReference>
<dbReference type="PROSITE" id="PS50020">
    <property type="entry name" value="WW_DOMAIN_2"/>
    <property type="match status" value="3"/>
</dbReference>
<sequence length="820" mass="93153">MSNNTRMDGLPAQPNLRVTIIAADGLYKRDVFRFPDPFAVATINGEQTKTTQVSKRTLNPYWNESFDFRVNEDSILAIQVFDQKKFKKKDQGFLGVINIRIGDVIDLVPDADDQMLTRDLKKSNDNLVVHGKLIINLSTNLSTPNRTQQTPSASRPSLLAPQTSTPNGTTDRPSSAMSSAVSTNGTPAASQPMPLAHRPASLASTTSTSQATAAATTSTTTATANGTPVQPRQVDVRQLSPFEDALGRLPPGWERREDHLGRTYYVDHNTRTTSWNRPTGTGQSDAEATQQAQRQQHQNRSLPEDRTGANSPTLQQQQAVAQAQATALVHTGATTAGTGELPPGWEMRWTPEGRPYFVDHNTRTTTWVDPRRQQYIRMYGGNNPNGIIQQQPVSQLGPLPSGWEMRLTNTARVYFVDHNTKTTTWDDPRLPSSLDQNVPQYKRDFRRKLIYFRSQPAMRILSGQCHIKVRRSHIFEDAFAEISRQSATDLKKRLMIKFDGEDGLDYGGLSREFFFLLSHEMFNPFYCLFEYSAHDNYTLQINPHSGINPEHLNYFKFIGRVVGLAIFHRRFLDAFFITAFYKMILGKPVTLADMEGVDADFHRSLQWMLDNDISGGIIEATFSTEDERFGVITVEDLKPNGRNIEVTNENKREYVELMVKWRIQKRVEEQFKAFKEGFNELIPQDLINVFDERELELLIGGIAEIDVDDWKKHTDYRGYTESDEVIQFFWQTVRSWDSEQKSRLLQFTTGTSRIPVNGFKDLQGSDGPRRFTIERAGDINNLPKAHTCFNRLDLPPYKTLEQLQQKLTMAVEETMGFGQE</sequence>
<evidence type="ECO:0000250" key="1">
    <source>
        <dbReference type="UniProtKB" id="P39940"/>
    </source>
</evidence>
<evidence type="ECO:0000250" key="2">
    <source>
        <dbReference type="UniProtKB" id="Q5BDP1"/>
    </source>
</evidence>
<evidence type="ECO:0000255" key="3">
    <source>
        <dbReference type="PROSITE-ProRule" id="PRU00041"/>
    </source>
</evidence>
<evidence type="ECO:0000255" key="4">
    <source>
        <dbReference type="PROSITE-ProRule" id="PRU00104"/>
    </source>
</evidence>
<evidence type="ECO:0000255" key="5">
    <source>
        <dbReference type="PROSITE-ProRule" id="PRU00224"/>
    </source>
</evidence>
<evidence type="ECO:0000256" key="6">
    <source>
        <dbReference type="SAM" id="MobiDB-lite"/>
    </source>
</evidence>
<evidence type="ECO:0000305" key="7"/>
<protein>
    <recommendedName>
        <fullName>E3 ubiquitin-protein ligase RSP5</fullName>
        <ecNumber>2.3.2.26</ecNumber>
    </recommendedName>
    <alternativeName>
        <fullName>HECT-type E3 ubiquitin transferase RSP5</fullName>
    </alternativeName>
</protein>
<keyword id="KW-0963">Cytoplasm</keyword>
<keyword id="KW-1185">Reference proteome</keyword>
<keyword id="KW-0677">Repeat</keyword>
<keyword id="KW-0808">Transferase</keyword>
<keyword id="KW-0833">Ubl conjugation pathway</keyword>
<gene>
    <name type="primary">RSP5</name>
    <name type="ORF">CTHT_0046110</name>
</gene>
<reference key="1">
    <citation type="journal article" date="2011" name="Cell">
        <title>Insight into structure and assembly of the nuclear pore complex by utilizing the genome of a eukaryotic thermophile.</title>
        <authorList>
            <person name="Amlacher S."/>
            <person name="Sarges P."/>
            <person name="Flemming D."/>
            <person name="van Noort V."/>
            <person name="Kunze R."/>
            <person name="Devos D.P."/>
            <person name="Arumugam M."/>
            <person name="Bork P."/>
            <person name="Hurt E."/>
        </authorList>
    </citation>
    <scope>NUCLEOTIDE SEQUENCE [LARGE SCALE GENOMIC DNA]</scope>
    <source>
        <strain>DSM 1495 / CBS 144.50 / IMI 039719</strain>
    </source>
</reference>
<proteinExistence type="inferred from homology"/>
<accession>G0S9J5</accession>
<organism>
    <name type="scientific">Chaetomium thermophilum (strain DSM 1495 / CBS 144.50 / IMI 039719)</name>
    <name type="common">Thermochaetoides thermophila</name>
    <dbReference type="NCBI Taxonomy" id="759272"/>
    <lineage>
        <taxon>Eukaryota</taxon>
        <taxon>Fungi</taxon>
        <taxon>Dikarya</taxon>
        <taxon>Ascomycota</taxon>
        <taxon>Pezizomycotina</taxon>
        <taxon>Sordariomycetes</taxon>
        <taxon>Sordariomycetidae</taxon>
        <taxon>Sordariales</taxon>
        <taxon>Chaetomiaceae</taxon>
        <taxon>Thermochaetoides</taxon>
    </lineage>
</organism>
<name>RSP5_CHATD</name>
<feature type="chain" id="PRO_0000435819" description="E3 ubiquitin-protein ligase RSP5">
    <location>
        <begin position="1"/>
        <end position="820"/>
    </location>
</feature>
<feature type="domain" description="C2" evidence="3">
    <location>
        <begin position="1"/>
        <end position="118"/>
    </location>
</feature>
<feature type="domain" description="WW 1" evidence="5">
    <location>
        <begin position="247"/>
        <end position="280"/>
    </location>
</feature>
<feature type="domain" description="WW 2" evidence="5">
    <location>
        <begin position="339"/>
        <end position="372"/>
    </location>
</feature>
<feature type="domain" description="WW 3" evidence="5">
    <location>
        <begin position="397"/>
        <end position="430"/>
    </location>
</feature>
<feature type="domain" description="HECT" evidence="4">
    <location>
        <begin position="486"/>
        <end position="820"/>
    </location>
</feature>
<feature type="region of interest" description="Disordered" evidence="6">
    <location>
        <begin position="140"/>
        <end position="255"/>
    </location>
</feature>
<feature type="region of interest" description="Disordered" evidence="6">
    <location>
        <begin position="270"/>
        <end position="326"/>
    </location>
</feature>
<feature type="compositionally biased region" description="Polar residues" evidence="6">
    <location>
        <begin position="140"/>
        <end position="189"/>
    </location>
</feature>
<feature type="compositionally biased region" description="Low complexity" evidence="6">
    <location>
        <begin position="200"/>
        <end position="224"/>
    </location>
</feature>
<feature type="compositionally biased region" description="Polar residues" evidence="6">
    <location>
        <begin position="271"/>
        <end position="289"/>
    </location>
</feature>
<feature type="compositionally biased region" description="Low complexity" evidence="6">
    <location>
        <begin position="313"/>
        <end position="326"/>
    </location>
</feature>
<feature type="active site" description="Glycyl thioester intermediate" evidence="4">
    <location>
        <position position="788"/>
    </location>
</feature>
<comment type="function">
    <text evidence="1">E3 ubiquitin-protein ligase which accepts ubiquitin from an E2 ubiquitin-conjugating enzyme in the form of a thioester and then directly transfers the ubiquitin to targeted substrates.</text>
</comment>
<comment type="catalytic activity">
    <reaction>
        <text>S-ubiquitinyl-[E2 ubiquitin-conjugating enzyme]-L-cysteine + [acceptor protein]-L-lysine = [E2 ubiquitin-conjugating enzyme]-L-cysteine + N(6)-ubiquitinyl-[acceptor protein]-L-lysine.</text>
        <dbReference type="EC" id="2.3.2.26"/>
    </reaction>
</comment>
<comment type="pathway">
    <text evidence="1">Protein modification; protein ubiquitination.</text>
</comment>
<comment type="subunit">
    <text evidence="2">Interacts with creD.</text>
</comment>
<comment type="subcellular location">
    <subcellularLocation>
        <location evidence="1">Cytoplasm</location>
    </subcellularLocation>
</comment>
<comment type="similarity">
    <text evidence="7">Belongs to the RSP5/NEDD4 family.</text>
</comment>
<comment type="sequence caution" evidence="7">
    <conflict type="erroneous gene model prediction">
        <sequence resource="EMBL-CDS" id="EGS20106"/>
    </conflict>
</comment>